<organism evidence="3">
    <name type="scientific">Arabidopsis thaliana</name>
    <name type="common">Mouse-ear cress</name>
    <dbReference type="NCBI Taxonomy" id="3702"/>
    <lineage>
        <taxon>Eukaryota</taxon>
        <taxon>Viridiplantae</taxon>
        <taxon>Streptophyta</taxon>
        <taxon>Embryophyta</taxon>
        <taxon>Tracheophyta</taxon>
        <taxon>Spermatophyta</taxon>
        <taxon>Magnoliopsida</taxon>
        <taxon>eudicotyledons</taxon>
        <taxon>Gunneridae</taxon>
        <taxon>Pentapetalae</taxon>
        <taxon>rosids</taxon>
        <taxon>malvids</taxon>
        <taxon>Brassicales</taxon>
        <taxon>Brassicaceae</taxon>
        <taxon>Camelineae</taxon>
        <taxon>Arabidopsis</taxon>
    </lineage>
</organism>
<reference evidence="3" key="1">
    <citation type="journal article" date="1999" name="Nature">
        <title>Sequence and analysis of chromosome 4 of the plant Arabidopsis thaliana.</title>
        <authorList>
            <person name="Mayer K.F.X."/>
            <person name="Schueller C."/>
            <person name="Wambutt R."/>
            <person name="Murphy G."/>
            <person name="Volckaert G."/>
            <person name="Pohl T."/>
            <person name="Duesterhoeft A."/>
            <person name="Stiekema W."/>
            <person name="Entian K.-D."/>
            <person name="Terryn N."/>
            <person name="Harris B."/>
            <person name="Ansorge W."/>
            <person name="Brandt P."/>
            <person name="Grivell L.A."/>
            <person name="Rieger M."/>
            <person name="Weichselgartner M."/>
            <person name="de Simone V."/>
            <person name="Obermaier B."/>
            <person name="Mache R."/>
            <person name="Mueller M."/>
            <person name="Kreis M."/>
            <person name="Delseny M."/>
            <person name="Puigdomenech P."/>
            <person name="Watson M."/>
            <person name="Schmidtheini T."/>
            <person name="Reichert B."/>
            <person name="Portetelle D."/>
            <person name="Perez-Alonso M."/>
            <person name="Boutry M."/>
            <person name="Bancroft I."/>
            <person name="Vos P."/>
            <person name="Hoheisel J."/>
            <person name="Zimmermann W."/>
            <person name="Wedler H."/>
            <person name="Ridley P."/>
            <person name="Langham S.-A."/>
            <person name="McCullagh B."/>
            <person name="Bilham L."/>
            <person name="Robben J."/>
            <person name="van der Schueren J."/>
            <person name="Grymonprez B."/>
            <person name="Chuang Y.-J."/>
            <person name="Vandenbussche F."/>
            <person name="Braeken M."/>
            <person name="Weltjens I."/>
            <person name="Voet M."/>
            <person name="Bastiaens I."/>
            <person name="Aert R."/>
            <person name="Defoor E."/>
            <person name="Weitzenegger T."/>
            <person name="Bothe G."/>
            <person name="Ramsperger U."/>
            <person name="Hilbert H."/>
            <person name="Braun M."/>
            <person name="Holzer E."/>
            <person name="Brandt A."/>
            <person name="Peters S."/>
            <person name="van Staveren M."/>
            <person name="Dirkse W."/>
            <person name="Mooijman P."/>
            <person name="Klein Lankhorst R."/>
            <person name="Rose M."/>
            <person name="Hauf J."/>
            <person name="Koetter P."/>
            <person name="Berneiser S."/>
            <person name="Hempel S."/>
            <person name="Feldpausch M."/>
            <person name="Lamberth S."/>
            <person name="Van den Daele H."/>
            <person name="De Keyser A."/>
            <person name="Buysshaert C."/>
            <person name="Gielen J."/>
            <person name="Villarroel R."/>
            <person name="De Clercq R."/>
            <person name="van Montagu M."/>
            <person name="Rogers J."/>
            <person name="Cronin A."/>
            <person name="Quail M.A."/>
            <person name="Bray-Allen S."/>
            <person name="Clark L."/>
            <person name="Doggett J."/>
            <person name="Hall S."/>
            <person name="Kay M."/>
            <person name="Lennard N."/>
            <person name="McLay K."/>
            <person name="Mayes R."/>
            <person name="Pettett A."/>
            <person name="Rajandream M.A."/>
            <person name="Lyne M."/>
            <person name="Benes V."/>
            <person name="Rechmann S."/>
            <person name="Borkova D."/>
            <person name="Bloecker H."/>
            <person name="Scharfe M."/>
            <person name="Grimm M."/>
            <person name="Loehnert T.-H."/>
            <person name="Dose S."/>
            <person name="de Haan M."/>
            <person name="Maarse A.C."/>
            <person name="Schaefer M."/>
            <person name="Mueller-Auer S."/>
            <person name="Gabel C."/>
            <person name="Fuchs M."/>
            <person name="Fartmann B."/>
            <person name="Granderath K."/>
            <person name="Dauner D."/>
            <person name="Herzl A."/>
            <person name="Neumann S."/>
            <person name="Argiriou A."/>
            <person name="Vitale D."/>
            <person name="Liguori R."/>
            <person name="Piravandi E."/>
            <person name="Massenet O."/>
            <person name="Quigley F."/>
            <person name="Clabauld G."/>
            <person name="Muendlein A."/>
            <person name="Felber R."/>
            <person name="Schnabl S."/>
            <person name="Hiller R."/>
            <person name="Schmidt W."/>
            <person name="Lecharny A."/>
            <person name="Aubourg S."/>
            <person name="Chefdor F."/>
            <person name="Cooke R."/>
            <person name="Berger C."/>
            <person name="Monfort A."/>
            <person name="Casacuberta E."/>
            <person name="Gibbons T."/>
            <person name="Weber N."/>
            <person name="Vandenbol M."/>
            <person name="Bargues M."/>
            <person name="Terol J."/>
            <person name="Torres A."/>
            <person name="Perez-Perez A."/>
            <person name="Purnelle B."/>
            <person name="Bent E."/>
            <person name="Johnson S."/>
            <person name="Tacon D."/>
            <person name="Jesse T."/>
            <person name="Heijnen L."/>
            <person name="Schwarz S."/>
            <person name="Scholler P."/>
            <person name="Heber S."/>
            <person name="Francs P."/>
            <person name="Bielke C."/>
            <person name="Frishman D."/>
            <person name="Haase D."/>
            <person name="Lemcke K."/>
            <person name="Mewes H.-W."/>
            <person name="Stocker S."/>
            <person name="Zaccaria P."/>
            <person name="Bevan M."/>
            <person name="Wilson R.K."/>
            <person name="de la Bastide M."/>
            <person name="Habermann K."/>
            <person name="Parnell L."/>
            <person name="Dedhia N."/>
            <person name="Gnoj L."/>
            <person name="Schutz K."/>
            <person name="Huang E."/>
            <person name="Spiegel L."/>
            <person name="Sekhon M."/>
            <person name="Murray J."/>
            <person name="Sheet P."/>
            <person name="Cordes M."/>
            <person name="Abu-Threideh J."/>
            <person name="Stoneking T."/>
            <person name="Kalicki J."/>
            <person name="Graves T."/>
            <person name="Harmon G."/>
            <person name="Edwards J."/>
            <person name="Latreille P."/>
            <person name="Courtney L."/>
            <person name="Cloud J."/>
            <person name="Abbott A."/>
            <person name="Scott K."/>
            <person name="Johnson D."/>
            <person name="Minx P."/>
            <person name="Bentley D."/>
            <person name="Fulton B."/>
            <person name="Miller N."/>
            <person name="Greco T."/>
            <person name="Kemp K."/>
            <person name="Kramer J."/>
            <person name="Fulton L."/>
            <person name="Mardis E."/>
            <person name="Dante M."/>
            <person name="Pepin K."/>
            <person name="Hillier L.W."/>
            <person name="Nelson J."/>
            <person name="Spieth J."/>
            <person name="Ryan E."/>
            <person name="Andrews S."/>
            <person name="Geisel C."/>
            <person name="Layman D."/>
            <person name="Du H."/>
            <person name="Ali J."/>
            <person name="Berghoff A."/>
            <person name="Jones K."/>
            <person name="Drone K."/>
            <person name="Cotton M."/>
            <person name="Joshu C."/>
            <person name="Antonoiu B."/>
            <person name="Zidanic M."/>
            <person name="Strong C."/>
            <person name="Sun H."/>
            <person name="Lamar B."/>
            <person name="Yordan C."/>
            <person name="Ma P."/>
            <person name="Zhong J."/>
            <person name="Preston R."/>
            <person name="Vil D."/>
            <person name="Shekher M."/>
            <person name="Matero A."/>
            <person name="Shah R."/>
            <person name="Swaby I.K."/>
            <person name="O'Shaughnessy A."/>
            <person name="Rodriguez M."/>
            <person name="Hoffman J."/>
            <person name="Till S."/>
            <person name="Granat S."/>
            <person name="Shohdy N."/>
            <person name="Hasegawa A."/>
            <person name="Hameed A."/>
            <person name="Lodhi M."/>
            <person name="Johnson A."/>
            <person name="Chen E."/>
            <person name="Marra M.A."/>
            <person name="Martienssen R."/>
            <person name="McCombie W.R."/>
        </authorList>
    </citation>
    <scope>NUCLEOTIDE SEQUENCE [LARGE SCALE GENOMIC DNA]</scope>
    <source>
        <strain>cv. Columbia</strain>
    </source>
</reference>
<reference key="2">
    <citation type="journal article" date="2017" name="Plant J.">
        <title>Araport11: a complete reannotation of the Arabidopsis thaliana reference genome.</title>
        <authorList>
            <person name="Cheng C.Y."/>
            <person name="Krishnakumar V."/>
            <person name="Chan A.P."/>
            <person name="Thibaud-Nissen F."/>
            <person name="Schobel S."/>
            <person name="Town C.D."/>
        </authorList>
    </citation>
    <scope>GENOME REANNOTATION</scope>
    <source>
        <strain>cv. Columbia</strain>
    </source>
</reference>
<reference evidence="3" key="3">
    <citation type="journal article" date="2001" name="Plant Mol. Biol.">
        <title>Two large Arabidopsis thaliana gene families are homologous to the Brassica gene superfamily that encodes pollen coat proteins and the male component of the self-incompatibility response.</title>
        <authorList>
            <person name="Vanoosthuyse V."/>
            <person name="Miege C."/>
            <person name="Dumas C."/>
            <person name="Cock J.M."/>
        </authorList>
    </citation>
    <scope>IDENTIFICATION</scope>
</reference>
<reference key="4">
    <citation type="journal article" date="2005" name="Plant Physiol.">
        <title>Genome organization of more than 300 defensin-like genes in Arabidopsis.</title>
        <authorList>
            <person name="Silverstein K.A.T."/>
            <person name="Graham M.A."/>
            <person name="Paape T.D."/>
            <person name="VandenBosch K.A."/>
        </authorList>
    </citation>
    <scope>GENE FAMILY</scope>
</reference>
<protein>
    <recommendedName>
        <fullName>Defensin-like protein 75</fullName>
    </recommendedName>
    <alternativeName>
        <fullName>Low-molecular-weight cysteine-rich protein 45</fullName>
        <shortName>Protein LCR45</shortName>
    </alternativeName>
</protein>
<feature type="signal peptide" evidence="2">
    <location>
        <begin position="1"/>
        <end position="26"/>
    </location>
</feature>
<feature type="chain" id="PRO_0000017284" description="Defensin-like protein 75">
    <location>
        <begin position="27"/>
        <end position="82"/>
    </location>
</feature>
<feature type="disulfide bond" evidence="1">
    <location>
        <begin position="33"/>
        <end position="66"/>
    </location>
</feature>
<feature type="disulfide bond" evidence="1">
    <location>
        <begin position="37"/>
        <end position="55"/>
    </location>
</feature>
<feature type="disulfide bond" evidence="1">
    <location>
        <begin position="41"/>
        <end position="64"/>
    </location>
</feature>
<feature type="disulfide bond" evidence="1">
    <location>
        <begin position="45"/>
        <end position="65"/>
    </location>
</feature>
<keyword id="KW-0929">Antimicrobial</keyword>
<keyword id="KW-1015">Disulfide bond</keyword>
<keyword id="KW-0295">Fungicide</keyword>
<keyword id="KW-0611">Plant defense</keyword>
<keyword id="KW-1185">Reference proteome</keyword>
<keyword id="KW-0964">Secreted</keyword>
<keyword id="KW-0732">Signal</keyword>
<gene>
    <name type="primary">LCR45</name>
    <name type="ordered locus">At4g39917</name>
    <name type="ORF">T5J17</name>
</gene>
<dbReference type="EMBL" id="AL035708">
    <property type="status" value="NOT_ANNOTATED_CDS"/>
    <property type="molecule type" value="Genomic_DNA"/>
</dbReference>
<dbReference type="EMBL" id="AL161596">
    <property type="status" value="NOT_ANNOTATED_CDS"/>
    <property type="molecule type" value="Genomic_DNA"/>
</dbReference>
<dbReference type="EMBL" id="CP002687">
    <property type="protein sequence ID" value="AEE87137.1"/>
    <property type="molecule type" value="Genomic_DNA"/>
</dbReference>
<dbReference type="RefSeq" id="NP_001031815.1">
    <property type="nucleotide sequence ID" value="NM_001036738.1"/>
</dbReference>
<dbReference type="SMR" id="P82760"/>
<dbReference type="PaxDb" id="3702-AT4G39917.1"/>
<dbReference type="ProteomicsDB" id="224049"/>
<dbReference type="EnsemblPlants" id="AT4G39917.1">
    <property type="protein sequence ID" value="AT4G39917.1"/>
    <property type="gene ID" value="AT4G39917"/>
</dbReference>
<dbReference type="GeneID" id="3770603"/>
<dbReference type="Gramene" id="AT4G39917.1">
    <property type="protein sequence ID" value="AT4G39917.1"/>
    <property type="gene ID" value="AT4G39917"/>
</dbReference>
<dbReference type="KEGG" id="ath:AT4G39917"/>
<dbReference type="Araport" id="AT4G39917"/>
<dbReference type="TAIR" id="AT4G39917">
    <property type="gene designation" value="LCR45"/>
</dbReference>
<dbReference type="HOGENOM" id="CLU_2545788_0_0_1"/>
<dbReference type="InParanoid" id="P82760"/>
<dbReference type="OMA" id="WTCASFR"/>
<dbReference type="OrthoDB" id="1045811at2759"/>
<dbReference type="PRO" id="PR:P82760"/>
<dbReference type="Proteomes" id="UP000006548">
    <property type="component" value="Chromosome 4"/>
</dbReference>
<dbReference type="ExpressionAtlas" id="P82760">
    <property type="expression patterns" value="baseline and differential"/>
</dbReference>
<dbReference type="GO" id="GO:0005576">
    <property type="term" value="C:extracellular region"/>
    <property type="evidence" value="ECO:0007669"/>
    <property type="project" value="UniProtKB-SubCell"/>
</dbReference>
<dbReference type="GO" id="GO:0050832">
    <property type="term" value="P:defense response to fungus"/>
    <property type="evidence" value="ECO:0007669"/>
    <property type="project" value="UniProtKB-KW"/>
</dbReference>
<dbReference type="GO" id="GO:0031640">
    <property type="term" value="P:killing of cells of another organism"/>
    <property type="evidence" value="ECO:0007669"/>
    <property type="project" value="UniProtKB-KW"/>
</dbReference>
<sequence>MAKIKSLDVITVAIILLLVIADQATAITVQADCIGPCNDDCQQLCKSKGYTDWTCASFRTKSSCCCKPPRHQIFEQNAQLNN</sequence>
<comment type="subcellular location">
    <subcellularLocation>
        <location evidence="1">Secreted</location>
    </subcellularLocation>
</comment>
<comment type="similarity">
    <text evidence="3">Belongs to the DEFL family.</text>
</comment>
<evidence type="ECO:0000250" key="1"/>
<evidence type="ECO:0000255" key="2"/>
<evidence type="ECO:0000305" key="3"/>
<accession>P82760</accession>
<name>DEF75_ARATH</name>
<proteinExistence type="evidence at transcript level"/>